<reference key="1">
    <citation type="submission" date="2009-06" db="EMBL/GenBank/DDBJ databases">
        <title>Complete sequence of Desulfovibrio salexigens DSM 2638.</title>
        <authorList>
            <consortium name="US DOE Joint Genome Institute"/>
            <person name="Lucas S."/>
            <person name="Copeland A."/>
            <person name="Lapidus A."/>
            <person name="Glavina del Rio T."/>
            <person name="Tice H."/>
            <person name="Bruce D."/>
            <person name="Goodwin L."/>
            <person name="Pitluck S."/>
            <person name="Munk A.C."/>
            <person name="Brettin T."/>
            <person name="Detter J.C."/>
            <person name="Han C."/>
            <person name="Tapia R."/>
            <person name="Larimer F."/>
            <person name="Land M."/>
            <person name="Hauser L."/>
            <person name="Kyrpides N."/>
            <person name="Anderson I."/>
            <person name="Wall J.D."/>
            <person name="Arkin A.P."/>
            <person name="Dehal P."/>
            <person name="Chivian D."/>
            <person name="Giles B."/>
            <person name="Hazen T.C."/>
        </authorList>
    </citation>
    <scope>NUCLEOTIDE SEQUENCE [LARGE SCALE GENOMIC DNA]</scope>
    <source>
        <strain>ATCC 14822 / DSM 2638 / NCIMB 8403 / VKM B-1763</strain>
    </source>
</reference>
<comment type="function">
    <text evidence="1">Required for accurate and efficient protein synthesis under certain stress conditions. May act as a fidelity factor of the translation reaction, by catalyzing a one-codon backward translocation of tRNAs on improperly translocated ribosomes. Back-translocation proceeds from a post-translocation (POST) complex to a pre-translocation (PRE) complex, thus giving elongation factor G a second chance to translocate the tRNAs correctly. Binds to ribosomes in a GTP-dependent manner.</text>
</comment>
<comment type="catalytic activity">
    <reaction evidence="1">
        <text>GTP + H2O = GDP + phosphate + H(+)</text>
        <dbReference type="Rhea" id="RHEA:19669"/>
        <dbReference type="ChEBI" id="CHEBI:15377"/>
        <dbReference type="ChEBI" id="CHEBI:15378"/>
        <dbReference type="ChEBI" id="CHEBI:37565"/>
        <dbReference type="ChEBI" id="CHEBI:43474"/>
        <dbReference type="ChEBI" id="CHEBI:58189"/>
        <dbReference type="EC" id="3.6.5.n1"/>
    </reaction>
</comment>
<comment type="subcellular location">
    <subcellularLocation>
        <location evidence="1">Cell inner membrane</location>
        <topology evidence="1">Peripheral membrane protein</topology>
        <orientation evidence="1">Cytoplasmic side</orientation>
    </subcellularLocation>
</comment>
<comment type="similarity">
    <text evidence="1">Belongs to the TRAFAC class translation factor GTPase superfamily. Classic translation factor GTPase family. LepA subfamily.</text>
</comment>
<feature type="chain" id="PRO_1000202446" description="Elongation factor 4">
    <location>
        <begin position="1"/>
        <end position="601"/>
    </location>
</feature>
<feature type="domain" description="tr-type G">
    <location>
        <begin position="5"/>
        <end position="187"/>
    </location>
</feature>
<feature type="binding site" evidence="1">
    <location>
        <begin position="17"/>
        <end position="22"/>
    </location>
    <ligand>
        <name>GTP</name>
        <dbReference type="ChEBI" id="CHEBI:37565"/>
    </ligand>
</feature>
<feature type="binding site" evidence="1">
    <location>
        <begin position="134"/>
        <end position="137"/>
    </location>
    <ligand>
        <name>GTP</name>
        <dbReference type="ChEBI" id="CHEBI:37565"/>
    </ligand>
</feature>
<gene>
    <name evidence="1" type="primary">lepA</name>
    <name type="ordered locus">Desal_3490</name>
</gene>
<keyword id="KW-0997">Cell inner membrane</keyword>
<keyword id="KW-1003">Cell membrane</keyword>
<keyword id="KW-0342">GTP-binding</keyword>
<keyword id="KW-0378">Hydrolase</keyword>
<keyword id="KW-0472">Membrane</keyword>
<keyword id="KW-0547">Nucleotide-binding</keyword>
<keyword id="KW-0648">Protein biosynthesis</keyword>
<keyword id="KW-1185">Reference proteome</keyword>
<organism>
    <name type="scientific">Maridesulfovibrio salexigens (strain ATCC 14822 / DSM 2638 / NCIMB 8403 / VKM B-1763)</name>
    <name type="common">Desulfovibrio salexigens</name>
    <dbReference type="NCBI Taxonomy" id="526222"/>
    <lineage>
        <taxon>Bacteria</taxon>
        <taxon>Pseudomonadati</taxon>
        <taxon>Thermodesulfobacteriota</taxon>
        <taxon>Desulfovibrionia</taxon>
        <taxon>Desulfovibrionales</taxon>
        <taxon>Desulfovibrionaceae</taxon>
        <taxon>Maridesulfovibrio</taxon>
    </lineage>
</organism>
<accession>C6BST2</accession>
<name>LEPA_MARSD</name>
<proteinExistence type="inferred from homology"/>
<sequence>MAKLDKIRNFSIIAHIDHGKSTLADRILEITGMVSEREKKDQYLDKMELEQERGITIKAQTVRIPYKANDGEEYILNLIDTPGHVDFSYEVSRSLAASEGALLVVDSTQGVEAQTLANVFLALDHDLEIVPVLNKVDLPSSDCERVAQEIEEVIGLDCSEPLMISAKTGLNVEDVLESIVKDLPAPQGDPDAPLKALIFDSWYDSYQGVVVLFRILDGTIKKGDKIQIHSTGRTFDVTTLGVYTPEPQKAKELAAGEVGFLCASMKELNDAPVGDTITLAADPVEDPFPGFQEVKPMVFCGLYPVEPAEYEPLKAALEKLQLNDTAFSFEPETSTALGFGFRCGFLGLLHMEIIQERLEREFQAKLIATAPSVVYQARLNNGEVLEIDNPSKMPDGGDLESLAEPFCRLEIHVPNDYVGAVLKLCEEKRGIQKDMRYLTSSRVIITYEVPFAEIMYDFFDKLKSHTKGYASLDYEIIDYRESNLVKLDILINTDPVDAFSAIVHKDSAYPFGRSLALKLKRAIPRQMFEIVIQAAIGRKIIAKERVAPFRKNVTAKCYGGDITRKRKLLEKQKEGKKRMKKMGNVEIPQEAFMAVLKAGED</sequence>
<evidence type="ECO:0000255" key="1">
    <source>
        <dbReference type="HAMAP-Rule" id="MF_00071"/>
    </source>
</evidence>
<protein>
    <recommendedName>
        <fullName evidence="1">Elongation factor 4</fullName>
        <shortName evidence="1">EF-4</shortName>
        <ecNumber evidence="1">3.6.5.n1</ecNumber>
    </recommendedName>
    <alternativeName>
        <fullName evidence="1">Ribosomal back-translocase LepA</fullName>
    </alternativeName>
</protein>
<dbReference type="EC" id="3.6.5.n1" evidence="1"/>
<dbReference type="EMBL" id="CP001649">
    <property type="protein sequence ID" value="ACS81538.1"/>
    <property type="molecule type" value="Genomic_DNA"/>
</dbReference>
<dbReference type="RefSeq" id="WP_015853354.1">
    <property type="nucleotide sequence ID" value="NC_012881.1"/>
</dbReference>
<dbReference type="SMR" id="C6BST2"/>
<dbReference type="STRING" id="526222.Desal_3490"/>
<dbReference type="KEGG" id="dsa:Desal_3490"/>
<dbReference type="eggNOG" id="COG0481">
    <property type="taxonomic scope" value="Bacteria"/>
</dbReference>
<dbReference type="HOGENOM" id="CLU_009995_3_3_7"/>
<dbReference type="OrthoDB" id="9801472at2"/>
<dbReference type="Proteomes" id="UP000002601">
    <property type="component" value="Chromosome"/>
</dbReference>
<dbReference type="GO" id="GO:0005886">
    <property type="term" value="C:plasma membrane"/>
    <property type="evidence" value="ECO:0007669"/>
    <property type="project" value="UniProtKB-SubCell"/>
</dbReference>
<dbReference type="GO" id="GO:0005525">
    <property type="term" value="F:GTP binding"/>
    <property type="evidence" value="ECO:0007669"/>
    <property type="project" value="UniProtKB-UniRule"/>
</dbReference>
<dbReference type="GO" id="GO:0003924">
    <property type="term" value="F:GTPase activity"/>
    <property type="evidence" value="ECO:0007669"/>
    <property type="project" value="UniProtKB-UniRule"/>
</dbReference>
<dbReference type="GO" id="GO:0043022">
    <property type="term" value="F:ribosome binding"/>
    <property type="evidence" value="ECO:0007669"/>
    <property type="project" value="UniProtKB-UniRule"/>
</dbReference>
<dbReference type="GO" id="GO:0003746">
    <property type="term" value="F:translation elongation factor activity"/>
    <property type="evidence" value="ECO:0007669"/>
    <property type="project" value="UniProtKB-UniRule"/>
</dbReference>
<dbReference type="GO" id="GO:0045727">
    <property type="term" value="P:positive regulation of translation"/>
    <property type="evidence" value="ECO:0007669"/>
    <property type="project" value="UniProtKB-UniRule"/>
</dbReference>
<dbReference type="CDD" id="cd03699">
    <property type="entry name" value="EF4_II"/>
    <property type="match status" value="1"/>
</dbReference>
<dbReference type="CDD" id="cd16260">
    <property type="entry name" value="EF4_III"/>
    <property type="match status" value="1"/>
</dbReference>
<dbReference type="CDD" id="cd01890">
    <property type="entry name" value="LepA"/>
    <property type="match status" value="1"/>
</dbReference>
<dbReference type="CDD" id="cd03709">
    <property type="entry name" value="lepA_C"/>
    <property type="match status" value="1"/>
</dbReference>
<dbReference type="FunFam" id="3.40.50.300:FF:000078">
    <property type="entry name" value="Elongation factor 4"/>
    <property type="match status" value="1"/>
</dbReference>
<dbReference type="FunFam" id="2.40.30.10:FF:000015">
    <property type="entry name" value="Translation factor GUF1, mitochondrial"/>
    <property type="match status" value="1"/>
</dbReference>
<dbReference type="FunFam" id="3.30.70.240:FF:000007">
    <property type="entry name" value="Translation factor GUF1, mitochondrial"/>
    <property type="match status" value="1"/>
</dbReference>
<dbReference type="FunFam" id="3.30.70.2570:FF:000001">
    <property type="entry name" value="Translation factor GUF1, mitochondrial"/>
    <property type="match status" value="1"/>
</dbReference>
<dbReference type="FunFam" id="3.30.70.870:FF:000004">
    <property type="entry name" value="Translation factor GUF1, mitochondrial"/>
    <property type="match status" value="1"/>
</dbReference>
<dbReference type="Gene3D" id="3.30.70.240">
    <property type="match status" value="1"/>
</dbReference>
<dbReference type="Gene3D" id="3.30.70.2570">
    <property type="entry name" value="Elongation factor 4, C-terminal domain"/>
    <property type="match status" value="1"/>
</dbReference>
<dbReference type="Gene3D" id="3.30.70.870">
    <property type="entry name" value="Elongation Factor G (Translational Gtpase), domain 3"/>
    <property type="match status" value="1"/>
</dbReference>
<dbReference type="Gene3D" id="3.40.50.300">
    <property type="entry name" value="P-loop containing nucleotide triphosphate hydrolases"/>
    <property type="match status" value="1"/>
</dbReference>
<dbReference type="Gene3D" id="2.40.30.10">
    <property type="entry name" value="Translation factors"/>
    <property type="match status" value="1"/>
</dbReference>
<dbReference type="HAMAP" id="MF_00071">
    <property type="entry name" value="LepA"/>
    <property type="match status" value="1"/>
</dbReference>
<dbReference type="InterPro" id="IPR006297">
    <property type="entry name" value="EF-4"/>
</dbReference>
<dbReference type="InterPro" id="IPR035647">
    <property type="entry name" value="EFG_III/V"/>
</dbReference>
<dbReference type="InterPro" id="IPR000640">
    <property type="entry name" value="EFG_V-like"/>
</dbReference>
<dbReference type="InterPro" id="IPR004161">
    <property type="entry name" value="EFTu-like_2"/>
</dbReference>
<dbReference type="InterPro" id="IPR031157">
    <property type="entry name" value="G_TR_CS"/>
</dbReference>
<dbReference type="InterPro" id="IPR038363">
    <property type="entry name" value="LepA_C_sf"/>
</dbReference>
<dbReference type="InterPro" id="IPR013842">
    <property type="entry name" value="LepA_CTD"/>
</dbReference>
<dbReference type="InterPro" id="IPR035654">
    <property type="entry name" value="LepA_IV"/>
</dbReference>
<dbReference type="InterPro" id="IPR027417">
    <property type="entry name" value="P-loop_NTPase"/>
</dbReference>
<dbReference type="InterPro" id="IPR005225">
    <property type="entry name" value="Small_GTP-bd"/>
</dbReference>
<dbReference type="InterPro" id="IPR000795">
    <property type="entry name" value="T_Tr_GTP-bd_dom"/>
</dbReference>
<dbReference type="NCBIfam" id="TIGR01393">
    <property type="entry name" value="lepA"/>
    <property type="match status" value="1"/>
</dbReference>
<dbReference type="NCBIfam" id="TIGR00231">
    <property type="entry name" value="small_GTP"/>
    <property type="match status" value="1"/>
</dbReference>
<dbReference type="PANTHER" id="PTHR43512:SF4">
    <property type="entry name" value="TRANSLATION FACTOR GUF1 HOMOLOG, CHLOROPLASTIC"/>
    <property type="match status" value="1"/>
</dbReference>
<dbReference type="PANTHER" id="PTHR43512">
    <property type="entry name" value="TRANSLATION FACTOR GUF1-RELATED"/>
    <property type="match status" value="1"/>
</dbReference>
<dbReference type="Pfam" id="PF00679">
    <property type="entry name" value="EFG_C"/>
    <property type="match status" value="1"/>
</dbReference>
<dbReference type="Pfam" id="PF00009">
    <property type="entry name" value="GTP_EFTU"/>
    <property type="match status" value="1"/>
</dbReference>
<dbReference type="Pfam" id="PF03144">
    <property type="entry name" value="GTP_EFTU_D2"/>
    <property type="match status" value="1"/>
</dbReference>
<dbReference type="Pfam" id="PF06421">
    <property type="entry name" value="LepA_C"/>
    <property type="match status" value="1"/>
</dbReference>
<dbReference type="PRINTS" id="PR00315">
    <property type="entry name" value="ELONGATNFCT"/>
</dbReference>
<dbReference type="SMART" id="SM00838">
    <property type="entry name" value="EFG_C"/>
    <property type="match status" value="1"/>
</dbReference>
<dbReference type="SUPFAM" id="SSF54980">
    <property type="entry name" value="EF-G C-terminal domain-like"/>
    <property type="match status" value="2"/>
</dbReference>
<dbReference type="SUPFAM" id="SSF52540">
    <property type="entry name" value="P-loop containing nucleoside triphosphate hydrolases"/>
    <property type="match status" value="1"/>
</dbReference>
<dbReference type="PROSITE" id="PS00301">
    <property type="entry name" value="G_TR_1"/>
    <property type="match status" value="1"/>
</dbReference>
<dbReference type="PROSITE" id="PS51722">
    <property type="entry name" value="G_TR_2"/>
    <property type="match status" value="1"/>
</dbReference>